<name>RHLB_SALPK</name>
<feature type="chain" id="PRO_1000131306" description="ATP-dependent RNA helicase RhlB">
    <location>
        <begin position="1"/>
        <end position="421"/>
    </location>
</feature>
<feature type="domain" description="Helicase ATP-binding" evidence="1">
    <location>
        <begin position="40"/>
        <end position="219"/>
    </location>
</feature>
<feature type="domain" description="Helicase C-terminal" evidence="1">
    <location>
        <begin position="245"/>
        <end position="390"/>
    </location>
</feature>
<feature type="region of interest" description="Disordered" evidence="2">
    <location>
        <begin position="396"/>
        <end position="421"/>
    </location>
</feature>
<feature type="short sequence motif" description="Q motif">
    <location>
        <begin position="9"/>
        <end position="37"/>
    </location>
</feature>
<feature type="short sequence motif" description="DEAD box">
    <location>
        <begin position="165"/>
        <end position="168"/>
    </location>
</feature>
<feature type="compositionally biased region" description="Low complexity" evidence="2">
    <location>
        <begin position="402"/>
        <end position="414"/>
    </location>
</feature>
<feature type="binding site" evidence="1">
    <location>
        <begin position="53"/>
        <end position="60"/>
    </location>
    <ligand>
        <name>ATP</name>
        <dbReference type="ChEBI" id="CHEBI:30616"/>
    </ligand>
</feature>
<accession>B5BIS9</accession>
<sequence length="421" mass="47061">MSKTHLTEQKFSDFALHPQVVEALEKKGFYNCTPIQALALPLTLAGRDVAGQAQTGTGKTMAFLTSTFHYLLSHPAIDDRKVNQPRALIMAPTRELAVQIHADAEPLAQATGLKLGLAYGGDGYDKQLKVLESGVDILIGTTGRLIDYAKQNHINLGAIQVVVLDEADRMYDLGFIKDIRWLFRRVPPAAQRLNMLFSATLSYRVRELAFEQMNNAEYVEVEPEQKTGHRIKEELFYPSNEEKMRLLQTLIEEEWPDRAIIFANTKHRCEDIWGHLAADGHRVGLLTGDVAQKKRLRILDEFTRGDLDILVATDVAARGLHIPAVTHVFNYDLPDDCEDYVHRIGRTGRAGASGHSISLACEEYALNLPAIESYIGHSIPVSKYNPEALMNDLPKPLRLTRSRPGNGPRRAGAPRNRRRSG</sequence>
<gene>
    <name evidence="1" type="primary">rhlB</name>
    <name type="ordered locus">SSPA3499.1</name>
    <name type="ORF">SSPA3499a</name>
</gene>
<keyword id="KW-0067">ATP-binding</keyword>
<keyword id="KW-0963">Cytoplasm</keyword>
<keyword id="KW-0347">Helicase</keyword>
<keyword id="KW-0378">Hydrolase</keyword>
<keyword id="KW-0547">Nucleotide-binding</keyword>
<keyword id="KW-0694">RNA-binding</keyword>
<proteinExistence type="inferred from homology"/>
<reference key="1">
    <citation type="journal article" date="2009" name="BMC Genomics">
        <title>Pseudogene accumulation in the evolutionary histories of Salmonella enterica serovars Paratyphi A and Typhi.</title>
        <authorList>
            <person name="Holt K.E."/>
            <person name="Thomson N.R."/>
            <person name="Wain J."/>
            <person name="Langridge G.C."/>
            <person name="Hasan R."/>
            <person name="Bhutta Z.A."/>
            <person name="Quail M.A."/>
            <person name="Norbertczak H."/>
            <person name="Walker D."/>
            <person name="Simmonds M."/>
            <person name="White B."/>
            <person name="Bason N."/>
            <person name="Mungall K."/>
            <person name="Dougan G."/>
            <person name="Parkhill J."/>
        </authorList>
    </citation>
    <scope>NUCLEOTIDE SEQUENCE [LARGE SCALE GENOMIC DNA]</scope>
    <source>
        <strain>AKU_12601</strain>
    </source>
</reference>
<dbReference type="EC" id="3.6.4.13" evidence="1"/>
<dbReference type="EMBL" id="FM200053">
    <property type="protein sequence ID" value="CAR61777.1"/>
    <property type="molecule type" value="Genomic_DNA"/>
</dbReference>
<dbReference type="RefSeq" id="WP_000047528.1">
    <property type="nucleotide sequence ID" value="NC_011147.1"/>
</dbReference>
<dbReference type="SMR" id="B5BIS9"/>
<dbReference type="KEGG" id="sek:SSPA3499a"/>
<dbReference type="HOGENOM" id="CLU_003041_1_3_6"/>
<dbReference type="Proteomes" id="UP000001869">
    <property type="component" value="Chromosome"/>
</dbReference>
<dbReference type="GO" id="GO:0005829">
    <property type="term" value="C:cytosol"/>
    <property type="evidence" value="ECO:0007669"/>
    <property type="project" value="TreeGrafter"/>
</dbReference>
<dbReference type="GO" id="GO:0005524">
    <property type="term" value="F:ATP binding"/>
    <property type="evidence" value="ECO:0007669"/>
    <property type="project" value="UniProtKB-UniRule"/>
</dbReference>
<dbReference type="GO" id="GO:0016887">
    <property type="term" value="F:ATP hydrolysis activity"/>
    <property type="evidence" value="ECO:0007669"/>
    <property type="project" value="RHEA"/>
</dbReference>
<dbReference type="GO" id="GO:0003723">
    <property type="term" value="F:RNA binding"/>
    <property type="evidence" value="ECO:0007669"/>
    <property type="project" value="UniProtKB-UniRule"/>
</dbReference>
<dbReference type="GO" id="GO:0003724">
    <property type="term" value="F:RNA helicase activity"/>
    <property type="evidence" value="ECO:0007669"/>
    <property type="project" value="UniProtKB-UniRule"/>
</dbReference>
<dbReference type="GO" id="GO:0006401">
    <property type="term" value="P:RNA catabolic process"/>
    <property type="evidence" value="ECO:0007669"/>
    <property type="project" value="UniProtKB-UniRule"/>
</dbReference>
<dbReference type="CDD" id="cd00268">
    <property type="entry name" value="DEADc"/>
    <property type="match status" value="1"/>
</dbReference>
<dbReference type="CDD" id="cd18787">
    <property type="entry name" value="SF2_C_DEAD"/>
    <property type="match status" value="1"/>
</dbReference>
<dbReference type="FunFam" id="3.40.50.300:FF:000008">
    <property type="entry name" value="ATP-dependent RNA helicase RhlB"/>
    <property type="match status" value="1"/>
</dbReference>
<dbReference type="FunFam" id="3.40.50.300:FF:000312">
    <property type="entry name" value="ATP-dependent RNA helicase RhlB"/>
    <property type="match status" value="1"/>
</dbReference>
<dbReference type="Gene3D" id="3.40.50.300">
    <property type="entry name" value="P-loop containing nucleotide triphosphate hydrolases"/>
    <property type="match status" value="2"/>
</dbReference>
<dbReference type="HAMAP" id="MF_00661">
    <property type="entry name" value="DEAD_helicase_RhlB"/>
    <property type="match status" value="1"/>
</dbReference>
<dbReference type="InterPro" id="IPR011545">
    <property type="entry name" value="DEAD/DEAH_box_helicase_dom"/>
</dbReference>
<dbReference type="InterPro" id="IPR050079">
    <property type="entry name" value="DEAD_box_RNA_helicase"/>
</dbReference>
<dbReference type="InterPro" id="IPR014001">
    <property type="entry name" value="Helicase_ATP-bd"/>
</dbReference>
<dbReference type="InterPro" id="IPR001650">
    <property type="entry name" value="Helicase_C-like"/>
</dbReference>
<dbReference type="InterPro" id="IPR027417">
    <property type="entry name" value="P-loop_NTPase"/>
</dbReference>
<dbReference type="InterPro" id="IPR000629">
    <property type="entry name" value="RNA-helicase_DEAD-box_CS"/>
</dbReference>
<dbReference type="InterPro" id="IPR023554">
    <property type="entry name" value="RNA_helicase_ATP-dep_RhlB"/>
</dbReference>
<dbReference type="InterPro" id="IPR014014">
    <property type="entry name" value="RNA_helicase_DEAD_Q_motif"/>
</dbReference>
<dbReference type="NCBIfam" id="NF003419">
    <property type="entry name" value="PRK04837.1"/>
    <property type="match status" value="1"/>
</dbReference>
<dbReference type="PANTHER" id="PTHR47959:SF10">
    <property type="entry name" value="ATP-DEPENDENT RNA HELICASE RHLB"/>
    <property type="match status" value="1"/>
</dbReference>
<dbReference type="PANTHER" id="PTHR47959">
    <property type="entry name" value="ATP-DEPENDENT RNA HELICASE RHLE-RELATED"/>
    <property type="match status" value="1"/>
</dbReference>
<dbReference type="Pfam" id="PF00270">
    <property type="entry name" value="DEAD"/>
    <property type="match status" value="1"/>
</dbReference>
<dbReference type="Pfam" id="PF00271">
    <property type="entry name" value="Helicase_C"/>
    <property type="match status" value="1"/>
</dbReference>
<dbReference type="SMART" id="SM00487">
    <property type="entry name" value="DEXDc"/>
    <property type="match status" value="1"/>
</dbReference>
<dbReference type="SMART" id="SM00490">
    <property type="entry name" value="HELICc"/>
    <property type="match status" value="1"/>
</dbReference>
<dbReference type="SUPFAM" id="SSF52540">
    <property type="entry name" value="P-loop containing nucleoside triphosphate hydrolases"/>
    <property type="match status" value="1"/>
</dbReference>
<dbReference type="PROSITE" id="PS00039">
    <property type="entry name" value="DEAD_ATP_HELICASE"/>
    <property type="match status" value="1"/>
</dbReference>
<dbReference type="PROSITE" id="PS51192">
    <property type="entry name" value="HELICASE_ATP_BIND_1"/>
    <property type="match status" value="1"/>
</dbReference>
<dbReference type="PROSITE" id="PS51194">
    <property type="entry name" value="HELICASE_CTER"/>
    <property type="match status" value="1"/>
</dbReference>
<dbReference type="PROSITE" id="PS51195">
    <property type="entry name" value="Q_MOTIF"/>
    <property type="match status" value="1"/>
</dbReference>
<evidence type="ECO:0000255" key="1">
    <source>
        <dbReference type="HAMAP-Rule" id="MF_00661"/>
    </source>
</evidence>
<evidence type="ECO:0000256" key="2">
    <source>
        <dbReference type="SAM" id="MobiDB-lite"/>
    </source>
</evidence>
<protein>
    <recommendedName>
        <fullName evidence="1">ATP-dependent RNA helicase RhlB</fullName>
        <ecNumber evidence="1">3.6.4.13</ecNumber>
    </recommendedName>
</protein>
<organism>
    <name type="scientific">Salmonella paratyphi A (strain AKU_12601)</name>
    <dbReference type="NCBI Taxonomy" id="554290"/>
    <lineage>
        <taxon>Bacteria</taxon>
        <taxon>Pseudomonadati</taxon>
        <taxon>Pseudomonadota</taxon>
        <taxon>Gammaproteobacteria</taxon>
        <taxon>Enterobacterales</taxon>
        <taxon>Enterobacteriaceae</taxon>
        <taxon>Salmonella</taxon>
    </lineage>
</organism>
<comment type="function">
    <text evidence="1">DEAD-box RNA helicase involved in RNA degradation. Has RNA-dependent ATPase activity and unwinds double-stranded RNA.</text>
</comment>
<comment type="catalytic activity">
    <reaction evidence="1">
        <text>ATP + H2O = ADP + phosphate + H(+)</text>
        <dbReference type="Rhea" id="RHEA:13065"/>
        <dbReference type="ChEBI" id="CHEBI:15377"/>
        <dbReference type="ChEBI" id="CHEBI:15378"/>
        <dbReference type="ChEBI" id="CHEBI:30616"/>
        <dbReference type="ChEBI" id="CHEBI:43474"/>
        <dbReference type="ChEBI" id="CHEBI:456216"/>
        <dbReference type="EC" id="3.6.4.13"/>
    </reaction>
</comment>
<comment type="subunit">
    <text evidence="1">Component of the RNA degradosome, which is a multiprotein complex involved in RNA processing and mRNA degradation.</text>
</comment>
<comment type="subcellular location">
    <subcellularLocation>
        <location evidence="1">Cytoplasm</location>
    </subcellularLocation>
</comment>
<comment type="similarity">
    <text evidence="1">Belongs to the DEAD box helicase family. RhlB subfamily.</text>
</comment>